<dbReference type="EMBL" id="AP009372">
    <property type="protein sequence ID" value="BAF50279.1"/>
    <property type="molecule type" value="Genomic_DNA"/>
</dbReference>
<dbReference type="RefSeq" id="YP_001123455.1">
    <property type="nucleotide sequence ID" value="NC_009271.1"/>
</dbReference>
<dbReference type="SMR" id="A4QKS4"/>
<dbReference type="GeneID" id="4962733"/>
<dbReference type="GO" id="GO:0009535">
    <property type="term" value="C:chloroplast thylakoid membrane"/>
    <property type="evidence" value="ECO:0007669"/>
    <property type="project" value="UniProtKB-SubCell"/>
</dbReference>
<dbReference type="GO" id="GO:0009512">
    <property type="term" value="C:cytochrome b6f complex"/>
    <property type="evidence" value="ECO:0007669"/>
    <property type="project" value="InterPro"/>
</dbReference>
<dbReference type="GO" id="GO:0045158">
    <property type="term" value="F:electron transporter, transferring electrons within cytochrome b6/f complex of photosystem II activity"/>
    <property type="evidence" value="ECO:0007669"/>
    <property type="project" value="InterPro"/>
</dbReference>
<dbReference type="GO" id="GO:0017004">
    <property type="term" value="P:cytochrome complex assembly"/>
    <property type="evidence" value="ECO:0007669"/>
    <property type="project" value="UniProtKB-UniRule"/>
</dbReference>
<dbReference type="GO" id="GO:0015979">
    <property type="term" value="P:photosynthesis"/>
    <property type="evidence" value="ECO:0007669"/>
    <property type="project" value="UniProtKB-KW"/>
</dbReference>
<dbReference type="HAMAP" id="MF_00395">
    <property type="entry name" value="Cytb6_f_PetN"/>
    <property type="match status" value="1"/>
</dbReference>
<dbReference type="InterPro" id="IPR036143">
    <property type="entry name" value="Cytochr_b6-f_cplx_su8_sf"/>
</dbReference>
<dbReference type="InterPro" id="IPR005497">
    <property type="entry name" value="Cytochrome_b6-f_cplx_su8"/>
</dbReference>
<dbReference type="Pfam" id="PF03742">
    <property type="entry name" value="PetN"/>
    <property type="match status" value="1"/>
</dbReference>
<dbReference type="SUPFAM" id="SSF103451">
    <property type="entry name" value="PetN subunit of the cytochrome b6f complex"/>
    <property type="match status" value="1"/>
</dbReference>
<proteinExistence type="inferred from homology"/>
<sequence length="29" mass="3170">MDIVSLAWAALMVVFTFSLSLVVWGRSGL</sequence>
<keyword id="KW-0150">Chloroplast</keyword>
<keyword id="KW-0249">Electron transport</keyword>
<keyword id="KW-0472">Membrane</keyword>
<keyword id="KW-0602">Photosynthesis</keyword>
<keyword id="KW-0934">Plastid</keyword>
<keyword id="KW-0793">Thylakoid</keyword>
<keyword id="KW-0812">Transmembrane</keyword>
<keyword id="KW-1133">Transmembrane helix</keyword>
<keyword id="KW-0813">Transport</keyword>
<accession>A4QKS4</accession>
<reference key="1">
    <citation type="submission" date="2007-03" db="EMBL/GenBank/DDBJ databases">
        <title>Sequencing analysis of Crucihimalaya wallichii chloroplast DNA.</title>
        <authorList>
            <person name="Hosouchi T."/>
            <person name="Tsuruoka H."/>
            <person name="Kotani H."/>
        </authorList>
    </citation>
    <scope>NUCLEOTIDE SEQUENCE [LARGE SCALE GENOMIC DNA]</scope>
</reference>
<geneLocation type="chloroplast"/>
<organism>
    <name type="scientific">Crucihimalaya wallichii</name>
    <name type="common">Rock-cress</name>
    <name type="synonym">Arabidopsis campestris</name>
    <dbReference type="NCBI Taxonomy" id="78192"/>
    <lineage>
        <taxon>Eukaryota</taxon>
        <taxon>Viridiplantae</taxon>
        <taxon>Streptophyta</taxon>
        <taxon>Embryophyta</taxon>
        <taxon>Tracheophyta</taxon>
        <taxon>Spermatophyta</taxon>
        <taxon>Magnoliopsida</taxon>
        <taxon>eudicotyledons</taxon>
        <taxon>Gunneridae</taxon>
        <taxon>Pentapetalae</taxon>
        <taxon>rosids</taxon>
        <taxon>malvids</taxon>
        <taxon>Brassicales</taxon>
        <taxon>Brassicaceae</taxon>
        <taxon>Crucihimalayeae</taxon>
        <taxon>Crucihimalaya</taxon>
    </lineage>
</organism>
<gene>
    <name evidence="1" type="primary">petN</name>
</gene>
<evidence type="ECO:0000255" key="1">
    <source>
        <dbReference type="HAMAP-Rule" id="MF_00395"/>
    </source>
</evidence>
<protein>
    <recommendedName>
        <fullName evidence="1">Cytochrome b6-f complex subunit 8</fullName>
    </recommendedName>
    <alternativeName>
        <fullName evidence="1">Cytochrome b6-f complex subunit PetN</fullName>
    </alternativeName>
    <alternativeName>
        <fullName evidence="1">Cytochrome b6-f complex subunit VIII</fullName>
    </alternativeName>
</protein>
<name>PETN_CRUWA</name>
<feature type="chain" id="PRO_0000355431" description="Cytochrome b6-f complex subunit 8">
    <location>
        <begin position="1"/>
        <end position="29"/>
    </location>
</feature>
<feature type="transmembrane region" description="Helical" evidence="1">
    <location>
        <begin position="3"/>
        <end position="23"/>
    </location>
</feature>
<comment type="function">
    <text evidence="1">Component of the cytochrome b6-f complex, which mediates electron transfer between photosystem II (PSII) and photosystem I (PSI), cyclic electron flow around PSI, and state transitions.</text>
</comment>
<comment type="subunit">
    <text evidence="1">The 4 large subunits of the cytochrome b6-f complex are cytochrome b6, subunit IV (17 kDa polypeptide, PetD), cytochrome f and the Rieske protein, while the 4 small subunits are PetG, PetL, PetM and PetN. The complex functions as a dimer.</text>
</comment>
<comment type="subcellular location">
    <subcellularLocation>
        <location evidence="1">Plastid</location>
        <location evidence="1">Chloroplast thylakoid membrane</location>
        <topology evidence="1">Single-pass membrane protein</topology>
    </subcellularLocation>
</comment>
<comment type="similarity">
    <text evidence="1">Belongs to the PetN family.</text>
</comment>